<sequence>MGAKNSVLRGKKADELEKIRLRPGGKKKYRLKHIVWAANELDRFGLTESLLESKEGCQKIISVLEPLVPTGSENLKSLYNTTCVIWCLHAEEKVKDTEEAKRIVGRHLVAETETAEKMPNISRPTAPPSGKGGNFPVQQIGGNYVHLPLSPRTLNAWVKLVEEKKFGAEVVPGFQALSEGCTPYDINQMLNCVGDHQAAMQIIREIINEEAADWDVQHPIPGPLPAGQLRDPRGSDIAGTTSTVEEQIEWMYRQENPVPVGNIYRRWIQIGLQKCVRMYNPTNILDIKQGPKESFQSYVDRFYKSLRAEQTDAAVKNWMTQTLLVQSNPDCKLVLKGLGMNPTLEEMLTACQGIGGPGQKARLMAEALKEAMRPAPIPFAAAQQKRAIKCWNCGKEGHSARQCRAPRRQGCWKCGKSGHIMANCPDRQAGFLGLGPWGKKPRNFPVVPSSQGLTPTAPPMDPAVDLLEKYMQQGRKQREQRQRPYKEVTEDLLHLEQGETPHRETTEDLLHLNSLFGNDQ</sequence>
<reference key="1">
    <citation type="journal article" date="1989" name="Proc. Natl. Acad. Sci. U.S.A.">
        <title>Molecular and biological characterization of a replication competent human immunodeficiency type 2 (HIV-2) proviral clone.</title>
        <authorList>
            <person name="Franchini G."/>
            <person name="Fargnoli K.A."/>
            <person name="Giombini F."/>
            <person name="Jagodzinski L.L."/>
            <person name="de Rossi A."/>
            <person name="Bosch M."/>
            <person name="Biberfeld G."/>
            <person name="Fenyo A.M."/>
            <person name="Albert J."/>
            <person name="Gallo R.C."/>
            <person name="Wong-Staal F."/>
        </authorList>
    </citation>
    <scope>NUCLEOTIDE SEQUENCE [GENOMIC DNA]</scope>
</reference>
<name>GAG_HV2SB</name>
<organism>
    <name type="scientific">Human immunodeficiency virus type 2 subtype A (isolate SBLISY)</name>
    <name type="common">HIV-2</name>
    <dbReference type="NCBI Taxonomy" id="11718"/>
    <lineage>
        <taxon>Viruses</taxon>
        <taxon>Riboviria</taxon>
        <taxon>Pararnavirae</taxon>
        <taxon>Artverviricota</taxon>
        <taxon>Revtraviricetes</taxon>
        <taxon>Ortervirales</taxon>
        <taxon>Retroviridae</taxon>
        <taxon>Orthoretrovirinae</taxon>
        <taxon>Lentivirus</taxon>
        <taxon>Human immunodeficiency virus 2</taxon>
    </lineage>
</organism>
<gene>
    <name type="primary">gag</name>
</gene>
<accession>P12450</accession>
<feature type="initiator methionine" description="Removed; by host" evidence="1">
    <location>
        <position position="1"/>
    </location>
</feature>
<feature type="chain" id="PRO_0000261249" description="Gag polyprotein">
    <location>
        <begin position="2"/>
        <end position="520"/>
    </location>
</feature>
<feature type="chain" id="PRO_0000038611" description="Matrix protein p17" evidence="1">
    <location>
        <begin position="2"/>
        <end position="135"/>
    </location>
</feature>
<feature type="chain" id="PRO_0000038612" description="Capsid protein p24" evidence="1">
    <location>
        <begin position="136"/>
        <end position="364"/>
    </location>
</feature>
<feature type="peptide" id="PRO_0000042083" description="Spacer peptide 1" evidence="1">
    <location>
        <begin position="365"/>
        <end position="381"/>
    </location>
</feature>
<feature type="chain" id="PRO_0000042084" description="Nucleocapsid protein p7" evidence="1">
    <location>
        <begin position="382"/>
        <end position="430"/>
    </location>
</feature>
<feature type="peptide" id="PRO_0000042085" description="Spacer peptide 2" evidence="1">
    <location>
        <begin position="431"/>
        <end position="444"/>
    </location>
</feature>
<feature type="chain" id="PRO_0000042086" description="p6-gag" evidence="1">
    <location>
        <begin position="445"/>
        <end position="520"/>
    </location>
</feature>
<feature type="zinc finger region" description="CCHC-type 1" evidence="9">
    <location>
        <begin position="388"/>
        <end position="405"/>
    </location>
</feature>
<feature type="zinc finger region" description="CCHC-type 2" evidence="9">
    <location>
        <begin position="409"/>
        <end position="426"/>
    </location>
</feature>
<feature type="region of interest" description="Interaction with Gp41" evidence="6">
    <location>
        <begin position="7"/>
        <end position="31"/>
    </location>
</feature>
<feature type="region of interest" description="Interaction with host CALM1" evidence="5">
    <location>
        <begin position="8"/>
        <end position="43"/>
    </location>
</feature>
<feature type="region of interest" description="Interaction with host AP3D1" evidence="7">
    <location>
        <begin position="12"/>
        <end position="19"/>
    </location>
</feature>
<feature type="region of interest" description="Interaction with membrane phosphatidylinositol 4,5-bisphosphate and RNA" evidence="6">
    <location>
        <begin position="14"/>
        <end position="33"/>
    </location>
</feature>
<feature type="region of interest" description="Interaction with membrane phosphatidylinositol 4,5-bisphosphate" evidence="6">
    <location>
        <begin position="73"/>
        <end position="77"/>
    </location>
</feature>
<feature type="region of interest" description="Interaction with host PPIA/CYPA and NUP153" evidence="6">
    <location>
        <begin position="191"/>
        <end position="228"/>
    </location>
</feature>
<feature type="region of interest" description="PPIA/CYPA-binding loop" evidence="5">
    <location>
        <begin position="219"/>
        <end position="226"/>
    </location>
</feature>
<feature type="region of interest" description="Dimerization/Multimerization of capsid protein p24" evidence="5">
    <location>
        <begin position="279"/>
        <end position="364"/>
    </location>
</feature>
<feature type="short sequence motif" description="Nuclear export signal" evidence="1">
    <location>
        <begin position="16"/>
        <end position="22"/>
    </location>
</feature>
<feature type="short sequence motif" description="Nuclear localization signal" evidence="1">
    <location>
        <begin position="26"/>
        <end position="32"/>
    </location>
</feature>
<feature type="short sequence motif" description="PTAP/PSAP motif">
    <location>
        <begin position="455"/>
        <end position="458"/>
    </location>
</feature>
<feature type="site" description="Cleavage; by viral protease" evidence="1">
    <location>
        <begin position="135"/>
        <end position="136"/>
    </location>
</feature>
<feature type="site" description="Cleavage; by viral protease" evidence="1">
    <location>
        <begin position="364"/>
        <end position="365"/>
    </location>
</feature>
<feature type="site" description="Cleavage; by viral protease" evidence="1">
    <location>
        <begin position="381"/>
        <end position="382"/>
    </location>
</feature>
<feature type="site" description="Cleavage; by viral protease" evidence="1">
    <location>
        <begin position="430"/>
        <end position="431"/>
    </location>
</feature>
<feature type="site" description="Cleavage; by viral protease" evidence="1">
    <location>
        <begin position="444"/>
        <end position="445"/>
    </location>
</feature>
<feature type="modified residue" description="Phosphoserine; by host MAPK1" evidence="6">
    <location>
        <position position="150"/>
    </location>
</feature>
<feature type="lipid moiety-binding region" description="N-myristoyl glycine; by host" evidence="1">
    <location>
        <position position="2"/>
    </location>
</feature>
<comment type="function">
    <molecule>Gag polyprotein</molecule>
    <text evidence="5">Mediates, with Gag-Pol polyprotein, the essential events in virion assembly, including binding the plasma membrane, making the protein-protein interactions necessary to create spherical particles, recruiting the viral Env proteins, and packaging the genomic RNA via direct interactions with the RNA packaging sequence (Psi).</text>
</comment>
<comment type="function">
    <molecule>Matrix protein p17</molecule>
    <text evidence="1 6">Targets the polyprotein to the plasma membrane via a multipartite membrane-binding signal, that includes its myristoylated N-terminus (By similarity). Matrix protein is part of the pre-integration complex. Implicated in the release from host cell mediated by Vpu. Binds to RNA (By similarity).</text>
</comment>
<comment type="function">
    <molecule>Capsid protein p24</molecule>
    <text evidence="5 6 8">Forms the conical core that encapsulates the genomic RNA-nucleocapsid complex in the virion (By similarity). Most core are conical, with only 7% tubular (By similarity). The core is constituted by capsid protein hexamer subunits (By similarity). The core is disassembled soon after virion entry (By similarity). Host restriction factors such as TRIM5-alpha or TRIMCyp bind retroviral capsids and cause premature capsid disassembly, leading to blocks in reverse transcription (By similarity). Capsid restriction by TRIM5 is one of the factors which restricts HIV-1 to the human species (By similarity). Host PIN1 apparently facilitates the virion uncoating (By similarity). On the other hand, interactions with PDZD8 or CYPA stabilize the capsid (By similarity). The capsid interacts with high affinity with human NONO, promoting detection of viral DNA by CGAS, leading to CGAS-mediated inmmune activation (By similarity).</text>
</comment>
<comment type="function">
    <molecule>Nucleocapsid protein p7</molecule>
    <text evidence="5">Encapsulates and protects viral dimeric unspliced genomic RNA (gRNA). Binds these RNAs through its zinc fingers. Acts as a nucleic acid chaperone which is involved in rearangement of nucleic acid secondary structure during gRNA retrotranscription. Also facilitates template switch leading to recombination. As part of the polyprotein, participates in gRNA dimerization, packaging, tRNA incorporation and virion assembly.</text>
</comment>
<comment type="function">
    <molecule>p6-gag</molecule>
    <text evidence="6">Plays a role in budding of the assembled particle by interacting with the host class E VPS proteins TSG101 and PDCD6IP/AIP1.</text>
</comment>
<comment type="subunit">
    <molecule>Gag polyprotein</molecule>
    <text evidence="4 5">Homotrimer; further assembles as hexamers of trimers. Oligomerization possibly creates a central hole into which the cytoplasmic tail of the gp41 envelope protein may be inserted. Interacts with host TRIM22; this interaction seems to disrupt proper trafficking of Gag polyprotein and may interfere with budding. Interacts with host PDZD8. When ubiquitinated, interacts (via p6-gag domain) with host PACSIN2; this interaction allows PACSIN2 recruitment to viral assembly sites and its subsequent incorporation into virions (By similarity).</text>
</comment>
<comment type="subunit">
    <molecule>Matrix protein p17</molecule>
    <text evidence="5 6">Homotrimer; further assembles as hexamers of trimers. Interacts with gp41 (via C-terminus). Interacts with host CALM1; this interaction induces a conformational change in the Matrix protein, triggering exposure of the myristate group. Interacts with host AP3D1; this interaction allows the polyprotein trafficking to multivesicular bodies during virus assembly. Part of the pre-integration complex (PIC) which is composed of viral genome, matrix protein, Vpr and integrase.</text>
</comment>
<comment type="subunit">
    <molecule>Capsid protein p24</molecule>
    <text evidence="5 6 8">Homodimer; the homodimer further multimerizes as homohexamers or homopentamers (By similarity). Interacts with host NUP98 (By similarity). Interacts with host PPIA/CYPA; this interaction stabilizes the capsid (By similarity). Interacts with host NUP153 (By similarity). Interacts with host PDZD8; this interaction stabilizes the capsid. Interacts with host TRIM5; this interaction destabilizes the capsid (By similarity). Interacts with host CPSF6 (By similarity). Interacts with host NONO; the interaction is the interaction is strong and promotes CGAS-mediated immunity (By similarity).</text>
</comment>
<comment type="subunit">
    <molecule>Nucleocapsid protein p7</molecule>
    <text evidence="6">Interacts with host NUP98.</text>
</comment>
<comment type="subunit">
    <molecule>p6-gag</molecule>
    <text evidence="3 6">Interacts with Vpr; this interaction allows Vpr incorporation into the virion. Interacts with host TSG101. p6-gag interacts with host PDCD6IP/AIP1.</text>
</comment>
<comment type="subcellular location">
    <molecule>Gag polyprotein</molecule>
    <subcellularLocation>
        <location evidence="6">Host cell membrane</location>
        <topology evidence="6">Lipid-anchor</topology>
    </subcellularLocation>
    <subcellularLocation>
        <location evidence="6">Host endosome</location>
        <location evidence="6">Host multivesicular body</location>
    </subcellularLocation>
    <text evidence="6">These locations are probably linked to virus assembly sites. The main location is the cell membrane, but under some circumstances, late endosomal compartments can serve as productive sites for virion assembly.</text>
</comment>
<comment type="subcellular location">
    <molecule>Matrix protein p17</molecule>
    <subcellularLocation>
        <location evidence="6">Virion membrane</location>
        <topology evidence="6">Lipid-anchor</topology>
    </subcellularLocation>
    <subcellularLocation>
        <location evidence="1">Host nucleus</location>
    </subcellularLocation>
    <subcellularLocation>
        <location evidence="1">Host cytoplasm</location>
    </subcellularLocation>
</comment>
<comment type="subcellular location">
    <molecule>Capsid protein p24</molecule>
    <subcellularLocation>
        <location evidence="6">Virion</location>
    </subcellularLocation>
</comment>
<comment type="subcellular location">
    <molecule>Nucleocapsid protein p7</molecule>
    <subcellularLocation>
        <location evidence="6">Virion</location>
    </subcellularLocation>
</comment>
<comment type="alternative products">
    <event type="ribosomal frameshifting"/>
    <isoform>
        <id>P12450-1</id>
        <name>Gag polyprotein</name>
        <sequence type="displayed"/>
    </isoform>
    <isoform>
        <id>P12451-1</id>
        <name>Gag-Pol polyprotein</name>
        <sequence type="external"/>
    </isoform>
    <text>Translation results in the formation of the Gag polyprotein most of the time. Ribosomal frameshifting at the gag-pol genes boundary occurs at low frequency and produces the Gag-Pol polyprotein. This strategy of translation probably allows the virus to modulate the quantity of each viral protein. Maintenance of a correct Gag to Gag-Pol ratio is essential for RNA dimerization and viral infectivity.</text>
</comment>
<comment type="domain">
    <text evidence="1">Late-budding domains (L domains) are short sequence motifs essential for viral particle budding. They recruit proteins of the host ESCRT machinery (Endosomal Sorting Complex Required for Transport) or ESCRT-associated proteins. p6-gag contains one L domains: a PTAP/PSAP motif, which interacts with the UEV domain of TSG101 (By similarity).</text>
</comment>
<comment type="PTM">
    <text evidence="6">Gag-Pol polyprotein: Specific enzymatic cleavages by the viral protease yield mature proteins.</text>
</comment>
<comment type="PTM">
    <molecule>Matrix protein p17</molecule>
    <text evidence="5">Tyrosine phosphorylated presumably in the virion by a host kinase. Phosphorylation is apparently not a major regulator of membrane association.</text>
</comment>
<comment type="PTM">
    <text evidence="6">Capsid protein p24 is phosphorylated possibly by host MAPK1; this phosphorylation is necessary for Pin1-mediated virion uncoating.</text>
</comment>
<comment type="PTM">
    <text evidence="2">Nucleocapsid protein p7 is methylated by host PRMT6, impairing its function by reducing RNA annealing and the initiation of reverse transcription.</text>
</comment>
<comment type="miscellaneous">
    <molecule>Isoform Gag polyprotein</molecule>
    <text>Produced by conventional translation.</text>
</comment>
<comment type="similarity">
    <text evidence="10">Belongs to the primate lentivirus group gag polyprotein family.</text>
</comment>
<proteinExistence type="inferred from homology"/>
<keyword id="KW-0014">AIDS</keyword>
<keyword id="KW-0167">Capsid protein</keyword>
<keyword id="KW-1032">Host cell membrane</keyword>
<keyword id="KW-1035">Host cytoplasm</keyword>
<keyword id="KW-1039">Host endosome</keyword>
<keyword id="KW-1043">Host membrane</keyword>
<keyword id="KW-1048">Host nucleus</keyword>
<keyword id="KW-0945">Host-virus interaction</keyword>
<keyword id="KW-0449">Lipoprotein</keyword>
<keyword id="KW-0472">Membrane</keyword>
<keyword id="KW-0479">Metal-binding</keyword>
<keyword id="KW-0519">Myristate</keyword>
<keyword id="KW-0597">Phosphoprotein</keyword>
<keyword id="KW-0677">Repeat</keyword>
<keyword id="KW-0688">Ribosomal frameshifting</keyword>
<keyword id="KW-0694">RNA-binding</keyword>
<keyword id="KW-1198">Viral budding</keyword>
<keyword id="KW-1187">Viral budding via the host ESCRT complexes</keyword>
<keyword id="KW-0543">Viral nucleoprotein</keyword>
<keyword id="KW-1188">Viral release from host cell</keyword>
<keyword id="KW-0946">Virion</keyword>
<keyword id="KW-0862">Zinc</keyword>
<keyword id="KW-0863">Zinc-finger</keyword>
<protein>
    <recommendedName>
        <fullName>Gag polyprotein</fullName>
    </recommendedName>
    <alternativeName>
        <fullName>Pr55Gag</fullName>
    </alternativeName>
    <component>
        <recommendedName>
            <fullName>Matrix protein p17</fullName>
            <shortName>MA</shortName>
        </recommendedName>
    </component>
    <component>
        <recommendedName>
            <fullName>Capsid protein p24</fullName>
            <shortName>CA</shortName>
        </recommendedName>
    </component>
    <component>
        <recommendedName>
            <fullName evidence="6">Spacer peptide 1</fullName>
            <shortName>SP1</shortName>
        </recommendedName>
        <alternativeName>
            <fullName>p2</fullName>
        </alternativeName>
    </component>
    <component>
        <recommendedName>
            <fullName>Nucleocapsid protein p7</fullName>
            <shortName>NC</shortName>
        </recommendedName>
    </component>
    <component>
        <recommendedName>
            <fullName evidence="6">Spacer peptide 2</fullName>
            <shortName>SP2</shortName>
        </recommendedName>
        <alternativeName>
            <fullName>p1</fullName>
        </alternativeName>
    </component>
    <component>
        <recommendedName>
            <fullName>p6-gag</fullName>
        </recommendedName>
    </component>
</protein>
<organismHost>
    <name type="scientific">Homo sapiens</name>
    <name type="common">Human</name>
    <dbReference type="NCBI Taxonomy" id="9606"/>
</organismHost>
<evidence type="ECO:0000250" key="1"/>
<evidence type="ECO:0000250" key="2">
    <source>
        <dbReference type="UniProtKB" id="P03347"/>
    </source>
</evidence>
<evidence type="ECO:0000250" key="3">
    <source>
        <dbReference type="UniProtKB" id="P03348"/>
    </source>
</evidence>
<evidence type="ECO:0000250" key="4">
    <source>
        <dbReference type="UniProtKB" id="P03349"/>
    </source>
</evidence>
<evidence type="ECO:0000250" key="5">
    <source>
        <dbReference type="UniProtKB" id="P04591"/>
    </source>
</evidence>
<evidence type="ECO:0000250" key="6">
    <source>
        <dbReference type="UniProtKB" id="P12493"/>
    </source>
</evidence>
<evidence type="ECO:0000250" key="7">
    <source>
        <dbReference type="UniProtKB" id="P12497"/>
    </source>
</evidence>
<evidence type="ECO:0000250" key="8">
    <source>
        <dbReference type="UniProtKB" id="P18095"/>
    </source>
</evidence>
<evidence type="ECO:0000255" key="9">
    <source>
        <dbReference type="PROSITE-ProRule" id="PRU00047"/>
    </source>
</evidence>
<evidence type="ECO:0000305" key="10"/>
<dbReference type="EMBL" id="J04498">
    <property type="protein sequence ID" value="AAB00745.1"/>
    <property type="molecule type" value="Genomic_DNA"/>
</dbReference>
<dbReference type="SMR" id="P12450"/>
<dbReference type="PRO" id="PR:P12450"/>
<dbReference type="Proteomes" id="UP000007427">
    <property type="component" value="Segment"/>
</dbReference>
<dbReference type="GO" id="GO:0042025">
    <property type="term" value="C:host cell nucleus"/>
    <property type="evidence" value="ECO:0007669"/>
    <property type="project" value="UniProtKB-SubCell"/>
</dbReference>
<dbReference type="GO" id="GO:0020002">
    <property type="term" value="C:host cell plasma membrane"/>
    <property type="evidence" value="ECO:0007669"/>
    <property type="project" value="UniProtKB-SubCell"/>
</dbReference>
<dbReference type="GO" id="GO:0072494">
    <property type="term" value="C:host multivesicular body"/>
    <property type="evidence" value="ECO:0007669"/>
    <property type="project" value="UniProtKB-SubCell"/>
</dbReference>
<dbReference type="GO" id="GO:0016020">
    <property type="term" value="C:membrane"/>
    <property type="evidence" value="ECO:0007669"/>
    <property type="project" value="UniProtKB-KW"/>
</dbReference>
<dbReference type="GO" id="GO:0019013">
    <property type="term" value="C:viral nucleocapsid"/>
    <property type="evidence" value="ECO:0007669"/>
    <property type="project" value="UniProtKB-KW"/>
</dbReference>
<dbReference type="GO" id="GO:0055036">
    <property type="term" value="C:virion membrane"/>
    <property type="evidence" value="ECO:0007669"/>
    <property type="project" value="UniProtKB-SubCell"/>
</dbReference>
<dbReference type="GO" id="GO:0003723">
    <property type="term" value="F:RNA binding"/>
    <property type="evidence" value="ECO:0007669"/>
    <property type="project" value="UniProtKB-KW"/>
</dbReference>
<dbReference type="GO" id="GO:0005198">
    <property type="term" value="F:structural molecule activity"/>
    <property type="evidence" value="ECO:0007669"/>
    <property type="project" value="InterPro"/>
</dbReference>
<dbReference type="GO" id="GO:0008270">
    <property type="term" value="F:zinc ion binding"/>
    <property type="evidence" value="ECO:0007669"/>
    <property type="project" value="UniProtKB-KW"/>
</dbReference>
<dbReference type="GO" id="GO:0039702">
    <property type="term" value="P:viral budding via host ESCRT complex"/>
    <property type="evidence" value="ECO:0007669"/>
    <property type="project" value="UniProtKB-KW"/>
</dbReference>
<dbReference type="GO" id="GO:0075523">
    <property type="term" value="P:viral translational frameshifting"/>
    <property type="evidence" value="ECO:0007669"/>
    <property type="project" value="UniProtKB-KW"/>
</dbReference>
<dbReference type="Gene3D" id="1.10.1200.30">
    <property type="match status" value="1"/>
</dbReference>
<dbReference type="Gene3D" id="1.10.375.10">
    <property type="entry name" value="Human Immunodeficiency Virus Type 1 Capsid Protein"/>
    <property type="match status" value="1"/>
</dbReference>
<dbReference type="Gene3D" id="1.10.150.90">
    <property type="entry name" value="Immunodeficiency lentiviruses, gag gene matrix protein p17"/>
    <property type="match status" value="1"/>
</dbReference>
<dbReference type="Gene3D" id="1.20.5.760">
    <property type="entry name" value="Single helix bin"/>
    <property type="match status" value="1"/>
</dbReference>
<dbReference type="Gene3D" id="4.10.60.10">
    <property type="entry name" value="Zinc finger, CCHC-type"/>
    <property type="match status" value="1"/>
</dbReference>
<dbReference type="InterPro" id="IPR045345">
    <property type="entry name" value="Gag_p24_C"/>
</dbReference>
<dbReference type="InterPro" id="IPR000071">
    <property type="entry name" value="Lentvrl_matrix_N"/>
</dbReference>
<dbReference type="InterPro" id="IPR012344">
    <property type="entry name" value="Matrix_HIV/RSV_N"/>
</dbReference>
<dbReference type="InterPro" id="IPR050195">
    <property type="entry name" value="Primate_lentivir_Gag_pol-like"/>
</dbReference>
<dbReference type="InterPro" id="IPR008916">
    <property type="entry name" value="Retrov_capsid_C"/>
</dbReference>
<dbReference type="InterPro" id="IPR008919">
    <property type="entry name" value="Retrov_capsid_N"/>
</dbReference>
<dbReference type="InterPro" id="IPR010999">
    <property type="entry name" value="Retrovr_matrix"/>
</dbReference>
<dbReference type="InterPro" id="IPR001878">
    <property type="entry name" value="Znf_CCHC"/>
</dbReference>
<dbReference type="InterPro" id="IPR036875">
    <property type="entry name" value="Znf_CCHC_sf"/>
</dbReference>
<dbReference type="PANTHER" id="PTHR40389">
    <property type="entry name" value="ENDOGENOUS RETROVIRUS GROUP K MEMBER 24 GAG POLYPROTEIN-RELATED"/>
    <property type="match status" value="1"/>
</dbReference>
<dbReference type="PANTHER" id="PTHR40389:SF2">
    <property type="entry name" value="ENDOGENOUS RETROVIRUS GROUP K MEMBER 24 GAG POLYPROTEIN-RELATED"/>
    <property type="match status" value="1"/>
</dbReference>
<dbReference type="Pfam" id="PF00540">
    <property type="entry name" value="Gag_p17"/>
    <property type="match status" value="1"/>
</dbReference>
<dbReference type="Pfam" id="PF00607">
    <property type="entry name" value="Gag_p24"/>
    <property type="match status" value="1"/>
</dbReference>
<dbReference type="Pfam" id="PF19317">
    <property type="entry name" value="Gag_p24_C"/>
    <property type="match status" value="1"/>
</dbReference>
<dbReference type="Pfam" id="PF00098">
    <property type="entry name" value="zf-CCHC"/>
    <property type="match status" value="2"/>
</dbReference>
<dbReference type="PRINTS" id="PR00234">
    <property type="entry name" value="HIV1MATRIX"/>
</dbReference>
<dbReference type="SMART" id="SM00343">
    <property type="entry name" value="ZnF_C2HC"/>
    <property type="match status" value="2"/>
</dbReference>
<dbReference type="SUPFAM" id="SSF47836">
    <property type="entry name" value="Retroviral matrix proteins"/>
    <property type="match status" value="1"/>
</dbReference>
<dbReference type="SUPFAM" id="SSF47353">
    <property type="entry name" value="Retrovirus capsid dimerization domain-like"/>
    <property type="match status" value="1"/>
</dbReference>
<dbReference type="SUPFAM" id="SSF47943">
    <property type="entry name" value="Retrovirus capsid protein, N-terminal core domain"/>
    <property type="match status" value="1"/>
</dbReference>
<dbReference type="SUPFAM" id="SSF57756">
    <property type="entry name" value="Retrovirus zinc finger-like domains"/>
    <property type="match status" value="1"/>
</dbReference>
<dbReference type="PROSITE" id="PS50158">
    <property type="entry name" value="ZF_CCHC"/>
    <property type="match status" value="2"/>
</dbReference>